<organism>
    <name type="scientific">Vibrio parahaemolyticus serotype O3:K6 (strain RIMD 2210633)</name>
    <dbReference type="NCBI Taxonomy" id="223926"/>
    <lineage>
        <taxon>Bacteria</taxon>
        <taxon>Pseudomonadati</taxon>
        <taxon>Pseudomonadota</taxon>
        <taxon>Gammaproteobacteria</taxon>
        <taxon>Vibrionales</taxon>
        <taxon>Vibrionaceae</taxon>
        <taxon>Vibrio</taxon>
    </lineage>
</organism>
<evidence type="ECO:0000255" key="1">
    <source>
        <dbReference type="HAMAP-Rule" id="MF_00409"/>
    </source>
</evidence>
<gene>
    <name evidence="1" type="primary">lpxK</name>
    <name type="ordered locus">VP0983</name>
</gene>
<proteinExistence type="inferred from homology"/>
<reference key="1">
    <citation type="journal article" date="2003" name="Lancet">
        <title>Genome sequence of Vibrio parahaemolyticus: a pathogenic mechanism distinct from that of V. cholerae.</title>
        <authorList>
            <person name="Makino K."/>
            <person name="Oshima K."/>
            <person name="Kurokawa K."/>
            <person name="Yokoyama K."/>
            <person name="Uda T."/>
            <person name="Tagomori K."/>
            <person name="Iijima Y."/>
            <person name="Najima M."/>
            <person name="Nakano M."/>
            <person name="Yamashita A."/>
            <person name="Kubota Y."/>
            <person name="Kimura S."/>
            <person name="Yasunaga T."/>
            <person name="Honda T."/>
            <person name="Shinagawa H."/>
            <person name="Hattori M."/>
            <person name="Iida T."/>
        </authorList>
    </citation>
    <scope>NUCLEOTIDE SEQUENCE [LARGE SCALE GENOMIC DNA]</scope>
    <source>
        <strain>RIMD 2210633</strain>
    </source>
</reference>
<keyword id="KW-0067">ATP-binding</keyword>
<keyword id="KW-0418">Kinase</keyword>
<keyword id="KW-0441">Lipid A biosynthesis</keyword>
<keyword id="KW-0444">Lipid biosynthesis</keyword>
<keyword id="KW-0443">Lipid metabolism</keyword>
<keyword id="KW-0547">Nucleotide-binding</keyword>
<keyword id="KW-0808">Transferase</keyword>
<feature type="chain" id="PRO_0000190954" description="Tetraacyldisaccharide 4'-kinase">
    <location>
        <begin position="1"/>
        <end position="335"/>
    </location>
</feature>
<feature type="binding site" evidence="1">
    <location>
        <begin position="59"/>
        <end position="66"/>
    </location>
    <ligand>
        <name>ATP</name>
        <dbReference type="ChEBI" id="CHEBI:30616"/>
    </ligand>
</feature>
<accession>Q87R15</accession>
<protein>
    <recommendedName>
        <fullName evidence="1">Tetraacyldisaccharide 4'-kinase</fullName>
        <ecNumber evidence="1">2.7.1.130</ecNumber>
    </recommendedName>
    <alternativeName>
        <fullName evidence="1">Lipid A 4'-kinase</fullName>
    </alternativeName>
</protein>
<sequence length="335" mass="37096">MVEKIWFENHPLKYLLWPLLWPLSVLFGAISRSKRQQFQTGRKQAYQAPVPVVVVGNITAGGNGKTPVVVWLVEQLQHLGYKPGVVSRGYGAKAPQYPLVLNDDTPTQHCGDEPKLIHRRTGAPVAVDPVRANAVKALVELDVDIIITDDGLQHYALERDVELVIVDGNRRFGNECLIPLGPLREGVERLQEVDFIITNGGLAHQGEISMSLAPSKAINLKTKQQVDVSELKALVAFAGIGHPPRFFNTLESMHADVKVTKGFADHQDFDQKELEALALQGANVIMTEKDAVKCSDYAQDNWWYLPVSAQLEPKDAERILNRIKEVKATYGSPSA</sequence>
<comment type="function">
    <text evidence="1">Transfers the gamma-phosphate of ATP to the 4'-position of a tetraacyldisaccharide 1-phosphate intermediate (termed DS-1-P) to form tetraacyldisaccharide 1,4'-bis-phosphate (lipid IVA).</text>
</comment>
<comment type="catalytic activity">
    <reaction evidence="1">
        <text>a lipid A disaccharide + ATP = a lipid IVA + ADP + H(+)</text>
        <dbReference type="Rhea" id="RHEA:67840"/>
        <dbReference type="ChEBI" id="CHEBI:15378"/>
        <dbReference type="ChEBI" id="CHEBI:30616"/>
        <dbReference type="ChEBI" id="CHEBI:176343"/>
        <dbReference type="ChEBI" id="CHEBI:176425"/>
        <dbReference type="ChEBI" id="CHEBI:456216"/>
        <dbReference type="EC" id="2.7.1.130"/>
    </reaction>
</comment>
<comment type="pathway">
    <text evidence="1">Glycolipid biosynthesis; lipid IV(A) biosynthesis; lipid IV(A) from (3R)-3-hydroxytetradecanoyl-[acyl-carrier-protein] and UDP-N-acetyl-alpha-D-glucosamine: step 6/6.</text>
</comment>
<comment type="similarity">
    <text evidence="1">Belongs to the LpxK family.</text>
</comment>
<name>LPXK_VIBPA</name>
<dbReference type="EC" id="2.7.1.130" evidence="1"/>
<dbReference type="EMBL" id="BA000031">
    <property type="protein sequence ID" value="BAC59246.1"/>
    <property type="molecule type" value="Genomic_DNA"/>
</dbReference>
<dbReference type="RefSeq" id="NP_797362.1">
    <property type="nucleotide sequence ID" value="NC_004603.1"/>
</dbReference>
<dbReference type="RefSeq" id="WP_005456276.1">
    <property type="nucleotide sequence ID" value="NC_004603.1"/>
</dbReference>
<dbReference type="SMR" id="Q87R15"/>
<dbReference type="GeneID" id="1188487"/>
<dbReference type="KEGG" id="vpa:VP0983"/>
<dbReference type="PATRIC" id="fig|223926.6.peg.932"/>
<dbReference type="eggNOG" id="COG1663">
    <property type="taxonomic scope" value="Bacteria"/>
</dbReference>
<dbReference type="HOGENOM" id="CLU_038816_2_0_6"/>
<dbReference type="UniPathway" id="UPA00359">
    <property type="reaction ID" value="UER00482"/>
</dbReference>
<dbReference type="Proteomes" id="UP000002493">
    <property type="component" value="Chromosome 1"/>
</dbReference>
<dbReference type="GO" id="GO:0005886">
    <property type="term" value="C:plasma membrane"/>
    <property type="evidence" value="ECO:0007669"/>
    <property type="project" value="TreeGrafter"/>
</dbReference>
<dbReference type="GO" id="GO:0005524">
    <property type="term" value="F:ATP binding"/>
    <property type="evidence" value="ECO:0007669"/>
    <property type="project" value="UniProtKB-UniRule"/>
</dbReference>
<dbReference type="GO" id="GO:0009029">
    <property type="term" value="F:tetraacyldisaccharide 4'-kinase activity"/>
    <property type="evidence" value="ECO:0007669"/>
    <property type="project" value="UniProtKB-UniRule"/>
</dbReference>
<dbReference type="GO" id="GO:0009245">
    <property type="term" value="P:lipid A biosynthetic process"/>
    <property type="evidence" value="ECO:0007669"/>
    <property type="project" value="UniProtKB-UniRule"/>
</dbReference>
<dbReference type="GO" id="GO:0009244">
    <property type="term" value="P:lipopolysaccharide core region biosynthetic process"/>
    <property type="evidence" value="ECO:0007669"/>
    <property type="project" value="TreeGrafter"/>
</dbReference>
<dbReference type="HAMAP" id="MF_00409">
    <property type="entry name" value="LpxK"/>
    <property type="match status" value="1"/>
</dbReference>
<dbReference type="InterPro" id="IPR003758">
    <property type="entry name" value="LpxK"/>
</dbReference>
<dbReference type="InterPro" id="IPR027417">
    <property type="entry name" value="P-loop_NTPase"/>
</dbReference>
<dbReference type="NCBIfam" id="TIGR00682">
    <property type="entry name" value="lpxK"/>
    <property type="match status" value="1"/>
</dbReference>
<dbReference type="PANTHER" id="PTHR42724">
    <property type="entry name" value="TETRAACYLDISACCHARIDE 4'-KINASE"/>
    <property type="match status" value="1"/>
</dbReference>
<dbReference type="PANTHER" id="PTHR42724:SF1">
    <property type="entry name" value="TETRAACYLDISACCHARIDE 4'-KINASE, MITOCHONDRIAL-RELATED"/>
    <property type="match status" value="1"/>
</dbReference>
<dbReference type="Pfam" id="PF02606">
    <property type="entry name" value="LpxK"/>
    <property type="match status" value="1"/>
</dbReference>
<dbReference type="SUPFAM" id="SSF52540">
    <property type="entry name" value="P-loop containing nucleoside triphosphate hydrolases"/>
    <property type="match status" value="1"/>
</dbReference>